<keyword id="KW-0687">Ribonucleoprotein</keyword>
<keyword id="KW-0689">Ribosomal protein</keyword>
<sequence>MSRVCQVTGKRPVTGNNRSHALNATKRRFLPNLHSHRFWVESEKRFVTLRVSAKGMRVIDKKGIDTVLAELRARGEKY</sequence>
<comment type="similarity">
    <text evidence="1">Belongs to the bacterial ribosomal protein bL28 family.</text>
</comment>
<feature type="chain" id="PRO_1000007228" description="Large ribosomal subunit protein bL28">
    <location>
        <begin position="1"/>
        <end position="78"/>
    </location>
</feature>
<proteinExistence type="inferred from homology"/>
<gene>
    <name evidence="1" type="primary">rpmB</name>
    <name type="ordered locus">ECP_3735</name>
</gene>
<name>RL28_ECOL5</name>
<accession>Q0TBH2</accession>
<organism>
    <name type="scientific">Escherichia coli O6:K15:H31 (strain 536 / UPEC)</name>
    <dbReference type="NCBI Taxonomy" id="362663"/>
    <lineage>
        <taxon>Bacteria</taxon>
        <taxon>Pseudomonadati</taxon>
        <taxon>Pseudomonadota</taxon>
        <taxon>Gammaproteobacteria</taxon>
        <taxon>Enterobacterales</taxon>
        <taxon>Enterobacteriaceae</taxon>
        <taxon>Escherichia</taxon>
    </lineage>
</organism>
<evidence type="ECO:0000255" key="1">
    <source>
        <dbReference type="HAMAP-Rule" id="MF_00373"/>
    </source>
</evidence>
<evidence type="ECO:0000305" key="2"/>
<protein>
    <recommendedName>
        <fullName evidence="1">Large ribosomal subunit protein bL28</fullName>
    </recommendedName>
    <alternativeName>
        <fullName evidence="2">50S ribosomal protein L28</fullName>
    </alternativeName>
</protein>
<dbReference type="EMBL" id="CP000247">
    <property type="protein sequence ID" value="ABG71707.1"/>
    <property type="molecule type" value="Genomic_DNA"/>
</dbReference>
<dbReference type="RefSeq" id="WP_000091955.1">
    <property type="nucleotide sequence ID" value="NC_008253.1"/>
</dbReference>
<dbReference type="SMR" id="Q0TBH2"/>
<dbReference type="GeneID" id="93778350"/>
<dbReference type="KEGG" id="ecp:ECP_3735"/>
<dbReference type="HOGENOM" id="CLU_064548_3_1_6"/>
<dbReference type="Proteomes" id="UP000009182">
    <property type="component" value="Chromosome"/>
</dbReference>
<dbReference type="GO" id="GO:0022625">
    <property type="term" value="C:cytosolic large ribosomal subunit"/>
    <property type="evidence" value="ECO:0007669"/>
    <property type="project" value="TreeGrafter"/>
</dbReference>
<dbReference type="GO" id="GO:0003735">
    <property type="term" value="F:structural constituent of ribosome"/>
    <property type="evidence" value="ECO:0007669"/>
    <property type="project" value="InterPro"/>
</dbReference>
<dbReference type="GO" id="GO:0006412">
    <property type="term" value="P:translation"/>
    <property type="evidence" value="ECO:0007669"/>
    <property type="project" value="UniProtKB-UniRule"/>
</dbReference>
<dbReference type="FunFam" id="2.30.170.40:FF:000001">
    <property type="entry name" value="50S ribosomal protein L28"/>
    <property type="match status" value="1"/>
</dbReference>
<dbReference type="Gene3D" id="2.30.170.40">
    <property type="entry name" value="Ribosomal protein L28/L24"/>
    <property type="match status" value="1"/>
</dbReference>
<dbReference type="HAMAP" id="MF_00373">
    <property type="entry name" value="Ribosomal_bL28"/>
    <property type="match status" value="1"/>
</dbReference>
<dbReference type="InterPro" id="IPR026569">
    <property type="entry name" value="Ribosomal_bL28"/>
</dbReference>
<dbReference type="InterPro" id="IPR034704">
    <property type="entry name" value="Ribosomal_bL28/bL31-like_sf"/>
</dbReference>
<dbReference type="InterPro" id="IPR001383">
    <property type="entry name" value="Ribosomal_bL28_bact-type"/>
</dbReference>
<dbReference type="InterPro" id="IPR037147">
    <property type="entry name" value="Ribosomal_bL28_sf"/>
</dbReference>
<dbReference type="NCBIfam" id="TIGR00009">
    <property type="entry name" value="L28"/>
    <property type="match status" value="1"/>
</dbReference>
<dbReference type="PANTHER" id="PTHR13528">
    <property type="entry name" value="39S RIBOSOMAL PROTEIN L28, MITOCHONDRIAL"/>
    <property type="match status" value="1"/>
</dbReference>
<dbReference type="PANTHER" id="PTHR13528:SF2">
    <property type="entry name" value="LARGE RIBOSOMAL SUBUNIT PROTEIN BL28M"/>
    <property type="match status" value="1"/>
</dbReference>
<dbReference type="Pfam" id="PF00830">
    <property type="entry name" value="Ribosomal_L28"/>
    <property type="match status" value="1"/>
</dbReference>
<dbReference type="SUPFAM" id="SSF143800">
    <property type="entry name" value="L28p-like"/>
    <property type="match status" value="1"/>
</dbReference>
<reference key="1">
    <citation type="journal article" date="2006" name="Mol. Microbiol.">
        <title>Role of pathogenicity island-associated integrases in the genome plasticity of uropathogenic Escherichia coli strain 536.</title>
        <authorList>
            <person name="Hochhut B."/>
            <person name="Wilde C."/>
            <person name="Balling G."/>
            <person name="Middendorf B."/>
            <person name="Dobrindt U."/>
            <person name="Brzuszkiewicz E."/>
            <person name="Gottschalk G."/>
            <person name="Carniel E."/>
            <person name="Hacker J."/>
        </authorList>
    </citation>
    <scope>NUCLEOTIDE SEQUENCE [LARGE SCALE GENOMIC DNA]</scope>
    <source>
        <strain>536 / UPEC</strain>
    </source>
</reference>